<keyword id="KW-0963">Cytoplasm</keyword>
<keyword id="KW-0350">Heme biosynthesis</keyword>
<keyword id="KW-0408">Iron</keyword>
<keyword id="KW-0456">Lyase</keyword>
<keyword id="KW-0479">Metal-binding</keyword>
<keyword id="KW-0627">Porphyrin biosynthesis</keyword>
<keyword id="KW-1185">Reference proteome</keyword>
<feature type="chain" id="PRO_1000119606" description="Ferrochelatase">
    <location>
        <begin position="1"/>
        <end position="320"/>
    </location>
</feature>
<feature type="binding site" evidence="1">
    <location>
        <position position="194"/>
    </location>
    <ligand>
        <name>Fe cation</name>
        <dbReference type="ChEBI" id="CHEBI:24875"/>
    </ligand>
</feature>
<feature type="binding site" evidence="1">
    <location>
        <position position="275"/>
    </location>
    <ligand>
        <name>Fe cation</name>
        <dbReference type="ChEBI" id="CHEBI:24875"/>
    </ligand>
</feature>
<sequence>MRQTKTGILLANLGTPDAPTPEAVKRYLKQFLSDRRVVDTSRLLWWPLLRSVILPLRSPRVAKLYASVWMEGGSPLMVYSRQQQQALAQRLPETPVALGMSYGSPSLESAVDELLAEHVDHIVVLPLYPQYSCSTVGAVWDELARILARKRSIPGISFIRDYADNHDYINALANSVRASFAKHGEPDLLLLSYHGIPQRYADEGDDYPQRCRTTTRELASALEMAPEKVMMTFQSRFGREPWLMPYTDETLKMLGEKGVGHIQVMCPGFAADCLETLEEIAEQNREVFLGAGGKKYEYIPALNATPEHIEMMANLVAAYR</sequence>
<proteinExistence type="inferred from homology"/>
<dbReference type="EC" id="4.98.1.1" evidence="1"/>
<dbReference type="EMBL" id="CU928161">
    <property type="protein sequence ID" value="CAR01819.1"/>
    <property type="molecule type" value="Genomic_DNA"/>
</dbReference>
<dbReference type="RefSeq" id="WP_001250129.1">
    <property type="nucleotide sequence ID" value="NC_011742.1"/>
</dbReference>
<dbReference type="SMR" id="B7MDZ7"/>
<dbReference type="KEGG" id="ecz:ECS88_0472"/>
<dbReference type="HOGENOM" id="CLU_018884_0_0_6"/>
<dbReference type="UniPathway" id="UPA00252">
    <property type="reaction ID" value="UER00325"/>
</dbReference>
<dbReference type="Proteomes" id="UP000000747">
    <property type="component" value="Chromosome"/>
</dbReference>
<dbReference type="GO" id="GO:0005737">
    <property type="term" value="C:cytoplasm"/>
    <property type="evidence" value="ECO:0007669"/>
    <property type="project" value="UniProtKB-SubCell"/>
</dbReference>
<dbReference type="GO" id="GO:0004325">
    <property type="term" value="F:ferrochelatase activity"/>
    <property type="evidence" value="ECO:0007669"/>
    <property type="project" value="UniProtKB-UniRule"/>
</dbReference>
<dbReference type="GO" id="GO:0046872">
    <property type="term" value="F:metal ion binding"/>
    <property type="evidence" value="ECO:0007669"/>
    <property type="project" value="UniProtKB-KW"/>
</dbReference>
<dbReference type="GO" id="GO:0006783">
    <property type="term" value="P:heme biosynthetic process"/>
    <property type="evidence" value="ECO:0007669"/>
    <property type="project" value="UniProtKB-UniRule"/>
</dbReference>
<dbReference type="CDD" id="cd00419">
    <property type="entry name" value="Ferrochelatase_C"/>
    <property type="match status" value="1"/>
</dbReference>
<dbReference type="CDD" id="cd03411">
    <property type="entry name" value="Ferrochelatase_N"/>
    <property type="match status" value="1"/>
</dbReference>
<dbReference type="FunFam" id="3.40.50.1400:FF:000004">
    <property type="entry name" value="Ferrochelatase"/>
    <property type="match status" value="1"/>
</dbReference>
<dbReference type="Gene3D" id="3.40.50.1400">
    <property type="match status" value="2"/>
</dbReference>
<dbReference type="HAMAP" id="MF_00323">
    <property type="entry name" value="Ferrochelatase"/>
    <property type="match status" value="1"/>
</dbReference>
<dbReference type="InterPro" id="IPR001015">
    <property type="entry name" value="Ferrochelatase"/>
</dbReference>
<dbReference type="InterPro" id="IPR019772">
    <property type="entry name" value="Ferrochelatase_AS"/>
</dbReference>
<dbReference type="InterPro" id="IPR033644">
    <property type="entry name" value="Ferrochelatase_C"/>
</dbReference>
<dbReference type="InterPro" id="IPR033659">
    <property type="entry name" value="Ferrochelatase_N"/>
</dbReference>
<dbReference type="NCBIfam" id="TIGR00109">
    <property type="entry name" value="hemH"/>
    <property type="match status" value="1"/>
</dbReference>
<dbReference type="PANTHER" id="PTHR11108">
    <property type="entry name" value="FERROCHELATASE"/>
    <property type="match status" value="1"/>
</dbReference>
<dbReference type="PANTHER" id="PTHR11108:SF1">
    <property type="entry name" value="FERROCHELATASE, MITOCHONDRIAL"/>
    <property type="match status" value="1"/>
</dbReference>
<dbReference type="Pfam" id="PF00762">
    <property type="entry name" value="Ferrochelatase"/>
    <property type="match status" value="1"/>
</dbReference>
<dbReference type="SUPFAM" id="SSF53800">
    <property type="entry name" value="Chelatase"/>
    <property type="match status" value="1"/>
</dbReference>
<dbReference type="PROSITE" id="PS00534">
    <property type="entry name" value="FERROCHELATASE"/>
    <property type="match status" value="1"/>
</dbReference>
<name>HEMH_ECO45</name>
<gene>
    <name evidence="1" type="primary">hemH</name>
    <name type="ordered locus">ECS88_0472</name>
</gene>
<organism>
    <name type="scientific">Escherichia coli O45:K1 (strain S88 / ExPEC)</name>
    <dbReference type="NCBI Taxonomy" id="585035"/>
    <lineage>
        <taxon>Bacteria</taxon>
        <taxon>Pseudomonadati</taxon>
        <taxon>Pseudomonadota</taxon>
        <taxon>Gammaproteobacteria</taxon>
        <taxon>Enterobacterales</taxon>
        <taxon>Enterobacteriaceae</taxon>
        <taxon>Escherichia</taxon>
    </lineage>
</organism>
<evidence type="ECO:0000255" key="1">
    <source>
        <dbReference type="HAMAP-Rule" id="MF_00323"/>
    </source>
</evidence>
<protein>
    <recommendedName>
        <fullName evidence="1">Ferrochelatase</fullName>
        <ecNumber evidence="1">4.98.1.1</ecNumber>
    </recommendedName>
    <alternativeName>
        <fullName evidence="1">Heme synthase</fullName>
    </alternativeName>
    <alternativeName>
        <fullName evidence="1">Protoheme ferro-lyase</fullName>
    </alternativeName>
</protein>
<accession>B7MDZ7</accession>
<reference key="1">
    <citation type="journal article" date="2009" name="PLoS Genet.">
        <title>Organised genome dynamics in the Escherichia coli species results in highly diverse adaptive paths.</title>
        <authorList>
            <person name="Touchon M."/>
            <person name="Hoede C."/>
            <person name="Tenaillon O."/>
            <person name="Barbe V."/>
            <person name="Baeriswyl S."/>
            <person name="Bidet P."/>
            <person name="Bingen E."/>
            <person name="Bonacorsi S."/>
            <person name="Bouchier C."/>
            <person name="Bouvet O."/>
            <person name="Calteau A."/>
            <person name="Chiapello H."/>
            <person name="Clermont O."/>
            <person name="Cruveiller S."/>
            <person name="Danchin A."/>
            <person name="Diard M."/>
            <person name="Dossat C."/>
            <person name="Karoui M.E."/>
            <person name="Frapy E."/>
            <person name="Garry L."/>
            <person name="Ghigo J.M."/>
            <person name="Gilles A.M."/>
            <person name="Johnson J."/>
            <person name="Le Bouguenec C."/>
            <person name="Lescat M."/>
            <person name="Mangenot S."/>
            <person name="Martinez-Jehanne V."/>
            <person name="Matic I."/>
            <person name="Nassif X."/>
            <person name="Oztas S."/>
            <person name="Petit M.A."/>
            <person name="Pichon C."/>
            <person name="Rouy Z."/>
            <person name="Ruf C.S."/>
            <person name="Schneider D."/>
            <person name="Tourret J."/>
            <person name="Vacherie B."/>
            <person name="Vallenet D."/>
            <person name="Medigue C."/>
            <person name="Rocha E.P.C."/>
            <person name="Denamur E."/>
        </authorList>
    </citation>
    <scope>NUCLEOTIDE SEQUENCE [LARGE SCALE GENOMIC DNA]</scope>
    <source>
        <strain>S88 / ExPEC</strain>
    </source>
</reference>
<comment type="function">
    <text evidence="1">Catalyzes the ferrous insertion into protoporphyrin IX.</text>
</comment>
<comment type="catalytic activity">
    <reaction evidence="1">
        <text>heme b + 2 H(+) = protoporphyrin IX + Fe(2+)</text>
        <dbReference type="Rhea" id="RHEA:22584"/>
        <dbReference type="ChEBI" id="CHEBI:15378"/>
        <dbReference type="ChEBI" id="CHEBI:29033"/>
        <dbReference type="ChEBI" id="CHEBI:57306"/>
        <dbReference type="ChEBI" id="CHEBI:60344"/>
        <dbReference type="EC" id="4.98.1.1"/>
    </reaction>
</comment>
<comment type="pathway">
    <text evidence="1">Porphyrin-containing compound metabolism; protoheme biosynthesis; protoheme from protoporphyrin-IX: step 1/1.</text>
</comment>
<comment type="subunit">
    <text evidence="1">Monomer.</text>
</comment>
<comment type="subcellular location">
    <subcellularLocation>
        <location evidence="1">Cytoplasm</location>
    </subcellularLocation>
</comment>
<comment type="similarity">
    <text evidence="1">Belongs to the ferrochelatase family.</text>
</comment>